<protein>
    <recommendedName>
        <fullName evidence="1">Argininosuccinate synthase</fullName>
        <ecNumber evidence="1">6.3.4.5</ecNumber>
    </recommendedName>
    <alternativeName>
        <fullName evidence="1">Citrulline--aspartate ligase</fullName>
    </alternativeName>
</protein>
<feature type="chain" id="PRO_1000073811" description="Argininosuccinate synthase">
    <location>
        <begin position="1"/>
        <end position="401"/>
    </location>
</feature>
<feature type="binding site" evidence="1">
    <location>
        <begin position="9"/>
        <end position="17"/>
    </location>
    <ligand>
        <name>ATP</name>
        <dbReference type="ChEBI" id="CHEBI:30616"/>
    </ligand>
</feature>
<feature type="binding site" evidence="1">
    <location>
        <position position="86"/>
    </location>
    <ligand>
        <name>L-citrulline</name>
        <dbReference type="ChEBI" id="CHEBI:57743"/>
    </ligand>
</feature>
<feature type="binding site" evidence="1">
    <location>
        <position position="116"/>
    </location>
    <ligand>
        <name>ATP</name>
        <dbReference type="ChEBI" id="CHEBI:30616"/>
    </ligand>
</feature>
<feature type="binding site" evidence="1">
    <location>
        <position position="118"/>
    </location>
    <ligand>
        <name>L-aspartate</name>
        <dbReference type="ChEBI" id="CHEBI:29991"/>
    </ligand>
</feature>
<feature type="binding site" evidence="1">
    <location>
        <position position="122"/>
    </location>
    <ligand>
        <name>L-aspartate</name>
        <dbReference type="ChEBI" id="CHEBI:29991"/>
    </ligand>
</feature>
<feature type="binding site" evidence="1">
    <location>
        <position position="122"/>
    </location>
    <ligand>
        <name>L-citrulline</name>
        <dbReference type="ChEBI" id="CHEBI:57743"/>
    </ligand>
</feature>
<feature type="binding site" evidence="1">
    <location>
        <position position="123"/>
    </location>
    <ligand>
        <name>L-aspartate</name>
        <dbReference type="ChEBI" id="CHEBI:29991"/>
    </ligand>
</feature>
<feature type="binding site" evidence="1">
    <location>
        <position position="126"/>
    </location>
    <ligand>
        <name>L-citrulline</name>
        <dbReference type="ChEBI" id="CHEBI:57743"/>
    </ligand>
</feature>
<feature type="binding site" evidence="1">
    <location>
        <position position="174"/>
    </location>
    <ligand>
        <name>L-citrulline</name>
        <dbReference type="ChEBI" id="CHEBI:57743"/>
    </ligand>
</feature>
<feature type="binding site" evidence="1">
    <location>
        <position position="183"/>
    </location>
    <ligand>
        <name>L-citrulline</name>
        <dbReference type="ChEBI" id="CHEBI:57743"/>
    </ligand>
</feature>
<feature type="binding site" evidence="1">
    <location>
        <position position="259"/>
    </location>
    <ligand>
        <name>L-citrulline</name>
        <dbReference type="ChEBI" id="CHEBI:57743"/>
    </ligand>
</feature>
<feature type="binding site" evidence="1">
    <location>
        <position position="271"/>
    </location>
    <ligand>
        <name>L-citrulline</name>
        <dbReference type="ChEBI" id="CHEBI:57743"/>
    </ligand>
</feature>
<gene>
    <name evidence="1" type="primary">argG</name>
    <name type="ordered locus">Bcer98_3306</name>
</gene>
<organism>
    <name type="scientific">Bacillus cytotoxicus (strain DSM 22905 / CIP 110041 / 391-98 / NVH 391-98)</name>
    <dbReference type="NCBI Taxonomy" id="315749"/>
    <lineage>
        <taxon>Bacteria</taxon>
        <taxon>Bacillati</taxon>
        <taxon>Bacillota</taxon>
        <taxon>Bacilli</taxon>
        <taxon>Bacillales</taxon>
        <taxon>Bacillaceae</taxon>
        <taxon>Bacillus</taxon>
        <taxon>Bacillus cereus group</taxon>
    </lineage>
</organism>
<keyword id="KW-0028">Amino-acid biosynthesis</keyword>
<keyword id="KW-0055">Arginine biosynthesis</keyword>
<keyword id="KW-0067">ATP-binding</keyword>
<keyword id="KW-0963">Cytoplasm</keyword>
<keyword id="KW-0436">Ligase</keyword>
<keyword id="KW-0547">Nucleotide-binding</keyword>
<comment type="catalytic activity">
    <reaction evidence="1">
        <text>L-citrulline + L-aspartate + ATP = 2-(N(omega)-L-arginino)succinate + AMP + diphosphate + H(+)</text>
        <dbReference type="Rhea" id="RHEA:10932"/>
        <dbReference type="ChEBI" id="CHEBI:15378"/>
        <dbReference type="ChEBI" id="CHEBI:29991"/>
        <dbReference type="ChEBI" id="CHEBI:30616"/>
        <dbReference type="ChEBI" id="CHEBI:33019"/>
        <dbReference type="ChEBI" id="CHEBI:57472"/>
        <dbReference type="ChEBI" id="CHEBI:57743"/>
        <dbReference type="ChEBI" id="CHEBI:456215"/>
        <dbReference type="EC" id="6.3.4.5"/>
    </reaction>
</comment>
<comment type="pathway">
    <text evidence="1">Amino-acid biosynthesis; L-arginine biosynthesis; L-arginine from L-ornithine and carbamoyl phosphate: step 2/3.</text>
</comment>
<comment type="subunit">
    <text evidence="1">Homotetramer.</text>
</comment>
<comment type="subcellular location">
    <subcellularLocation>
        <location evidence="1">Cytoplasm</location>
    </subcellularLocation>
</comment>
<comment type="similarity">
    <text evidence="1">Belongs to the argininosuccinate synthase family. Type 1 subfamily.</text>
</comment>
<name>ASSY_BACCN</name>
<evidence type="ECO:0000255" key="1">
    <source>
        <dbReference type="HAMAP-Rule" id="MF_00005"/>
    </source>
</evidence>
<accession>A7GTR5</accession>
<sequence length="401" mass="44796">MEKKKVVLAYSGGLDTSVAIKWLQEKNYDVIALCLDLGEGEDLEFVKEKALSVGAIKSYMIDVQEEFMNEYALVALQGHTLYEGKYPLVSALSRPLIAKKLVEIAELEGASAVAHGCTGKGNDQVRFEVSIQALNPYLEVIAPVREWKWSREEEIAYAKENDVPIPINLDSPFSIDQNLWGRSNECGILEDPWAAPPEDAYEMTVPLENTPDQPEFVEIGFEEGVPTTLNGTTYSLSQLMKTLNSLAGKHGIGRIDHVENRLVGIKSREVYECPAAMTLLTAHKELEDLTLVKEVAHFKPMMEQKLTELIYNGLWFSPLKQALVAFLQETQKTVSGTVRVKLFKGHAIVEGRKSEYSLYDENLATYTVNDEFNHDAAVGFISLFGLPTKVYSQVNQKKVEA</sequence>
<reference key="1">
    <citation type="journal article" date="2008" name="Chem. Biol. Interact.">
        <title>Extending the Bacillus cereus group genomics to putative food-borne pathogens of different toxicity.</title>
        <authorList>
            <person name="Lapidus A."/>
            <person name="Goltsman E."/>
            <person name="Auger S."/>
            <person name="Galleron N."/>
            <person name="Segurens B."/>
            <person name="Dossat C."/>
            <person name="Land M.L."/>
            <person name="Broussolle V."/>
            <person name="Brillard J."/>
            <person name="Guinebretiere M.-H."/>
            <person name="Sanchis V."/>
            <person name="Nguen-the C."/>
            <person name="Lereclus D."/>
            <person name="Richardson P."/>
            <person name="Wincker P."/>
            <person name="Weissenbach J."/>
            <person name="Ehrlich S.D."/>
            <person name="Sorokin A."/>
        </authorList>
    </citation>
    <scope>NUCLEOTIDE SEQUENCE [LARGE SCALE GENOMIC DNA]</scope>
    <source>
        <strain>DSM 22905 / CIP 110041 / 391-98 / NVH 391-98</strain>
    </source>
</reference>
<dbReference type="EC" id="6.3.4.5" evidence="1"/>
<dbReference type="EMBL" id="CP000764">
    <property type="protein sequence ID" value="ABS23523.1"/>
    <property type="molecule type" value="Genomic_DNA"/>
</dbReference>
<dbReference type="RefSeq" id="WP_012095764.1">
    <property type="nucleotide sequence ID" value="NC_009674.1"/>
</dbReference>
<dbReference type="SMR" id="A7GTR5"/>
<dbReference type="STRING" id="315749.Bcer98_3306"/>
<dbReference type="GeneID" id="33898551"/>
<dbReference type="KEGG" id="bcy:Bcer98_3306"/>
<dbReference type="eggNOG" id="COG0137">
    <property type="taxonomic scope" value="Bacteria"/>
</dbReference>
<dbReference type="HOGENOM" id="CLU_032784_4_2_9"/>
<dbReference type="OrthoDB" id="9801641at2"/>
<dbReference type="UniPathway" id="UPA00068">
    <property type="reaction ID" value="UER00113"/>
</dbReference>
<dbReference type="Proteomes" id="UP000002300">
    <property type="component" value="Chromosome"/>
</dbReference>
<dbReference type="GO" id="GO:0005737">
    <property type="term" value="C:cytoplasm"/>
    <property type="evidence" value="ECO:0007669"/>
    <property type="project" value="UniProtKB-SubCell"/>
</dbReference>
<dbReference type="GO" id="GO:0004055">
    <property type="term" value="F:argininosuccinate synthase activity"/>
    <property type="evidence" value="ECO:0007669"/>
    <property type="project" value="UniProtKB-UniRule"/>
</dbReference>
<dbReference type="GO" id="GO:0005524">
    <property type="term" value="F:ATP binding"/>
    <property type="evidence" value="ECO:0007669"/>
    <property type="project" value="UniProtKB-UniRule"/>
</dbReference>
<dbReference type="GO" id="GO:0000053">
    <property type="term" value="P:argininosuccinate metabolic process"/>
    <property type="evidence" value="ECO:0007669"/>
    <property type="project" value="TreeGrafter"/>
</dbReference>
<dbReference type="GO" id="GO:0006526">
    <property type="term" value="P:L-arginine biosynthetic process"/>
    <property type="evidence" value="ECO:0007669"/>
    <property type="project" value="UniProtKB-UniRule"/>
</dbReference>
<dbReference type="GO" id="GO:0000050">
    <property type="term" value="P:urea cycle"/>
    <property type="evidence" value="ECO:0007669"/>
    <property type="project" value="TreeGrafter"/>
</dbReference>
<dbReference type="CDD" id="cd01999">
    <property type="entry name" value="ASS"/>
    <property type="match status" value="1"/>
</dbReference>
<dbReference type="FunFam" id="1.20.5.470:FF:000002">
    <property type="entry name" value="Argininosuccinate synthase"/>
    <property type="match status" value="1"/>
</dbReference>
<dbReference type="FunFam" id="3.40.50.620:FF:000038">
    <property type="entry name" value="Argininosuccinate synthase"/>
    <property type="match status" value="1"/>
</dbReference>
<dbReference type="FunFam" id="3.90.1260.10:FF:000007">
    <property type="entry name" value="Argininosuccinate synthase"/>
    <property type="match status" value="1"/>
</dbReference>
<dbReference type="Gene3D" id="3.90.1260.10">
    <property type="entry name" value="Argininosuccinate synthetase, chain A, domain 2"/>
    <property type="match status" value="1"/>
</dbReference>
<dbReference type="Gene3D" id="3.40.50.620">
    <property type="entry name" value="HUPs"/>
    <property type="match status" value="1"/>
</dbReference>
<dbReference type="Gene3D" id="1.20.5.470">
    <property type="entry name" value="Single helix bin"/>
    <property type="match status" value="1"/>
</dbReference>
<dbReference type="HAMAP" id="MF_00005">
    <property type="entry name" value="Arg_succ_synth_type1"/>
    <property type="match status" value="1"/>
</dbReference>
<dbReference type="InterPro" id="IPR048268">
    <property type="entry name" value="Arginosuc_syn_C"/>
</dbReference>
<dbReference type="InterPro" id="IPR048267">
    <property type="entry name" value="Arginosuc_syn_N"/>
</dbReference>
<dbReference type="InterPro" id="IPR001518">
    <property type="entry name" value="Arginosuc_synth"/>
</dbReference>
<dbReference type="InterPro" id="IPR018223">
    <property type="entry name" value="Arginosuc_synth_CS"/>
</dbReference>
<dbReference type="InterPro" id="IPR023434">
    <property type="entry name" value="Arginosuc_synth_type_1_subfam"/>
</dbReference>
<dbReference type="InterPro" id="IPR024074">
    <property type="entry name" value="AS_cat/multimer_dom_body"/>
</dbReference>
<dbReference type="InterPro" id="IPR014729">
    <property type="entry name" value="Rossmann-like_a/b/a_fold"/>
</dbReference>
<dbReference type="NCBIfam" id="TIGR00032">
    <property type="entry name" value="argG"/>
    <property type="match status" value="1"/>
</dbReference>
<dbReference type="NCBIfam" id="NF001770">
    <property type="entry name" value="PRK00509.1"/>
    <property type="match status" value="1"/>
</dbReference>
<dbReference type="PANTHER" id="PTHR11587">
    <property type="entry name" value="ARGININOSUCCINATE SYNTHASE"/>
    <property type="match status" value="1"/>
</dbReference>
<dbReference type="PANTHER" id="PTHR11587:SF2">
    <property type="entry name" value="ARGININOSUCCINATE SYNTHASE"/>
    <property type="match status" value="1"/>
</dbReference>
<dbReference type="Pfam" id="PF20979">
    <property type="entry name" value="Arginosuc_syn_C"/>
    <property type="match status" value="1"/>
</dbReference>
<dbReference type="Pfam" id="PF00764">
    <property type="entry name" value="Arginosuc_synth"/>
    <property type="match status" value="1"/>
</dbReference>
<dbReference type="SUPFAM" id="SSF52402">
    <property type="entry name" value="Adenine nucleotide alpha hydrolases-like"/>
    <property type="match status" value="1"/>
</dbReference>
<dbReference type="SUPFAM" id="SSF69864">
    <property type="entry name" value="Argininosuccinate synthetase, C-terminal domain"/>
    <property type="match status" value="1"/>
</dbReference>
<dbReference type="PROSITE" id="PS00564">
    <property type="entry name" value="ARGININOSUCCIN_SYN_1"/>
    <property type="match status" value="1"/>
</dbReference>
<dbReference type="PROSITE" id="PS00565">
    <property type="entry name" value="ARGININOSUCCIN_SYN_2"/>
    <property type="match status" value="1"/>
</dbReference>
<proteinExistence type="inferred from homology"/>